<reference key="1">
    <citation type="journal article" date="2001" name="J. Mammal.">
        <title>Diversification in the genus Akodon (Rodentia: Sigmodontinae) in southeastern South America: mitochondrial DNA sequence analysis.</title>
        <authorList>
            <person name="Geise L."/>
            <person name="Smith M.F."/>
            <person name="Patton J.L."/>
        </authorList>
    </citation>
    <scope>NUCLEOTIDE SEQUENCE [GENOMIC DNA]</scope>
    <source>
        <strain>Isolate MN 35927</strain>
    </source>
</reference>
<reference key="2">
    <citation type="journal article" date="2003" name="Cladistics">
        <title>Phylogenetics of Sigmodontinae (Rodentia, Muroidea, Cricetidae), with special reference to the akodont group, and with additional comments on historical biogeography.</title>
        <authorList>
            <person name="D'Elia G."/>
        </authorList>
    </citation>
    <scope>NUCLEOTIDE SEQUENCE [GENOMIC DNA]</scope>
    <source>
        <strain>Isolate LG VA1</strain>
    </source>
</reference>
<keyword id="KW-0249">Electron transport</keyword>
<keyword id="KW-0349">Heme</keyword>
<keyword id="KW-0408">Iron</keyword>
<keyword id="KW-0472">Membrane</keyword>
<keyword id="KW-0479">Metal-binding</keyword>
<keyword id="KW-0496">Mitochondrion</keyword>
<keyword id="KW-0999">Mitochondrion inner membrane</keyword>
<keyword id="KW-0679">Respiratory chain</keyword>
<keyword id="KW-0812">Transmembrane</keyword>
<keyword id="KW-1133">Transmembrane helix</keyword>
<keyword id="KW-0813">Transport</keyword>
<keyword id="KW-0830">Ubiquinone</keyword>
<organism>
    <name type="scientific">Akodon serrensis</name>
    <name type="common">Serrado Mar grass mouse</name>
    <dbReference type="NCBI Taxonomy" id="106114"/>
    <lineage>
        <taxon>Eukaryota</taxon>
        <taxon>Metazoa</taxon>
        <taxon>Chordata</taxon>
        <taxon>Craniata</taxon>
        <taxon>Vertebrata</taxon>
        <taxon>Euteleostomi</taxon>
        <taxon>Mammalia</taxon>
        <taxon>Eutheria</taxon>
        <taxon>Euarchontoglires</taxon>
        <taxon>Glires</taxon>
        <taxon>Rodentia</taxon>
        <taxon>Myomorpha</taxon>
        <taxon>Muroidea</taxon>
        <taxon>Cricetidae</taxon>
        <taxon>Sigmodontinae</taxon>
        <taxon>Akodon</taxon>
    </lineage>
</organism>
<evidence type="ECO:0000250" key="1"/>
<evidence type="ECO:0000250" key="2">
    <source>
        <dbReference type="UniProtKB" id="P00157"/>
    </source>
</evidence>
<evidence type="ECO:0000255" key="3">
    <source>
        <dbReference type="PROSITE-ProRule" id="PRU00967"/>
    </source>
</evidence>
<evidence type="ECO:0000255" key="4">
    <source>
        <dbReference type="PROSITE-ProRule" id="PRU00968"/>
    </source>
</evidence>
<accession>Q9GAR5</accession>
<accession>Q6WRH1</accession>
<feature type="chain" id="PRO_0000257869" description="Cytochrome b">
    <location>
        <begin position="1"/>
        <end position="379"/>
    </location>
</feature>
<feature type="transmembrane region" description="Helical" evidence="2">
    <location>
        <begin position="33"/>
        <end position="53"/>
    </location>
</feature>
<feature type="transmembrane region" description="Helical" evidence="2">
    <location>
        <begin position="77"/>
        <end position="98"/>
    </location>
</feature>
<feature type="transmembrane region" description="Helical" evidence="2">
    <location>
        <begin position="113"/>
        <end position="133"/>
    </location>
</feature>
<feature type="transmembrane region" description="Helical" evidence="2">
    <location>
        <begin position="178"/>
        <end position="198"/>
    </location>
</feature>
<feature type="transmembrane region" description="Helical" evidence="2">
    <location>
        <begin position="226"/>
        <end position="246"/>
    </location>
</feature>
<feature type="transmembrane region" description="Helical" evidence="2">
    <location>
        <begin position="288"/>
        <end position="308"/>
    </location>
</feature>
<feature type="transmembrane region" description="Helical" evidence="2">
    <location>
        <begin position="320"/>
        <end position="340"/>
    </location>
</feature>
<feature type="transmembrane region" description="Helical" evidence="2">
    <location>
        <begin position="347"/>
        <end position="367"/>
    </location>
</feature>
<feature type="binding site" description="axial binding residue" evidence="2">
    <location>
        <position position="83"/>
    </location>
    <ligand>
        <name>heme b</name>
        <dbReference type="ChEBI" id="CHEBI:60344"/>
        <label>b562</label>
    </ligand>
    <ligandPart>
        <name>Fe</name>
        <dbReference type="ChEBI" id="CHEBI:18248"/>
    </ligandPart>
</feature>
<feature type="binding site" description="axial binding residue" evidence="2">
    <location>
        <position position="97"/>
    </location>
    <ligand>
        <name>heme b</name>
        <dbReference type="ChEBI" id="CHEBI:60344"/>
        <label>b566</label>
    </ligand>
    <ligandPart>
        <name>Fe</name>
        <dbReference type="ChEBI" id="CHEBI:18248"/>
    </ligandPart>
</feature>
<feature type="binding site" description="axial binding residue" evidence="2">
    <location>
        <position position="182"/>
    </location>
    <ligand>
        <name>heme b</name>
        <dbReference type="ChEBI" id="CHEBI:60344"/>
        <label>b562</label>
    </ligand>
    <ligandPart>
        <name>Fe</name>
        <dbReference type="ChEBI" id="CHEBI:18248"/>
    </ligandPart>
</feature>
<feature type="binding site" description="axial binding residue" evidence="2">
    <location>
        <position position="196"/>
    </location>
    <ligand>
        <name>heme b</name>
        <dbReference type="ChEBI" id="CHEBI:60344"/>
        <label>b566</label>
    </ligand>
    <ligandPart>
        <name>Fe</name>
        <dbReference type="ChEBI" id="CHEBI:18248"/>
    </ligandPart>
</feature>
<feature type="binding site" evidence="2">
    <location>
        <position position="201"/>
    </location>
    <ligand>
        <name>a ubiquinone</name>
        <dbReference type="ChEBI" id="CHEBI:16389"/>
    </ligand>
</feature>
<feature type="sequence variant" description="In strain: Isolate LG VA1.">
    <original>V</original>
    <variation>I</variation>
    <location>
        <position position="108"/>
    </location>
</feature>
<name>CYB_AKOSE</name>
<dbReference type="EMBL" id="AF184058">
    <property type="protein sequence ID" value="AAG16972.2"/>
    <property type="molecule type" value="Genomic_DNA"/>
</dbReference>
<dbReference type="EMBL" id="AY273908">
    <property type="protein sequence ID" value="AAQ20025.1"/>
    <property type="molecule type" value="Genomic_DNA"/>
</dbReference>
<dbReference type="GO" id="GO:0005743">
    <property type="term" value="C:mitochondrial inner membrane"/>
    <property type="evidence" value="ECO:0007669"/>
    <property type="project" value="UniProtKB-SubCell"/>
</dbReference>
<dbReference type="GO" id="GO:0045275">
    <property type="term" value="C:respiratory chain complex III"/>
    <property type="evidence" value="ECO:0007669"/>
    <property type="project" value="InterPro"/>
</dbReference>
<dbReference type="GO" id="GO:0046872">
    <property type="term" value="F:metal ion binding"/>
    <property type="evidence" value="ECO:0007669"/>
    <property type="project" value="UniProtKB-KW"/>
</dbReference>
<dbReference type="GO" id="GO:0008121">
    <property type="term" value="F:ubiquinol-cytochrome-c reductase activity"/>
    <property type="evidence" value="ECO:0007669"/>
    <property type="project" value="InterPro"/>
</dbReference>
<dbReference type="GO" id="GO:0006122">
    <property type="term" value="P:mitochondrial electron transport, ubiquinol to cytochrome c"/>
    <property type="evidence" value="ECO:0007669"/>
    <property type="project" value="TreeGrafter"/>
</dbReference>
<dbReference type="CDD" id="cd00290">
    <property type="entry name" value="cytochrome_b_C"/>
    <property type="match status" value="1"/>
</dbReference>
<dbReference type="CDD" id="cd00284">
    <property type="entry name" value="Cytochrome_b_N"/>
    <property type="match status" value="1"/>
</dbReference>
<dbReference type="FunFam" id="1.20.810.10:FF:000002">
    <property type="entry name" value="Cytochrome b"/>
    <property type="match status" value="1"/>
</dbReference>
<dbReference type="Gene3D" id="1.20.810.10">
    <property type="entry name" value="Cytochrome Bc1 Complex, Chain C"/>
    <property type="match status" value="1"/>
</dbReference>
<dbReference type="InterPro" id="IPR005798">
    <property type="entry name" value="Cyt_b/b6_C"/>
</dbReference>
<dbReference type="InterPro" id="IPR036150">
    <property type="entry name" value="Cyt_b/b6_C_sf"/>
</dbReference>
<dbReference type="InterPro" id="IPR005797">
    <property type="entry name" value="Cyt_b/b6_N"/>
</dbReference>
<dbReference type="InterPro" id="IPR027387">
    <property type="entry name" value="Cytb/b6-like_sf"/>
</dbReference>
<dbReference type="InterPro" id="IPR030689">
    <property type="entry name" value="Cytochrome_b"/>
</dbReference>
<dbReference type="InterPro" id="IPR048260">
    <property type="entry name" value="Cytochrome_b_C_euk/bac"/>
</dbReference>
<dbReference type="InterPro" id="IPR048259">
    <property type="entry name" value="Cytochrome_b_N_euk/bac"/>
</dbReference>
<dbReference type="InterPro" id="IPR016174">
    <property type="entry name" value="Di-haem_cyt_TM"/>
</dbReference>
<dbReference type="PANTHER" id="PTHR19271">
    <property type="entry name" value="CYTOCHROME B"/>
    <property type="match status" value="1"/>
</dbReference>
<dbReference type="PANTHER" id="PTHR19271:SF16">
    <property type="entry name" value="CYTOCHROME B"/>
    <property type="match status" value="1"/>
</dbReference>
<dbReference type="Pfam" id="PF00032">
    <property type="entry name" value="Cytochrom_B_C"/>
    <property type="match status" value="1"/>
</dbReference>
<dbReference type="Pfam" id="PF00033">
    <property type="entry name" value="Cytochrome_B"/>
    <property type="match status" value="1"/>
</dbReference>
<dbReference type="PIRSF" id="PIRSF038885">
    <property type="entry name" value="COB"/>
    <property type="match status" value="1"/>
</dbReference>
<dbReference type="SUPFAM" id="SSF81648">
    <property type="entry name" value="a domain/subunit of cytochrome bc1 complex (Ubiquinol-cytochrome c reductase)"/>
    <property type="match status" value="1"/>
</dbReference>
<dbReference type="SUPFAM" id="SSF81342">
    <property type="entry name" value="Transmembrane di-heme cytochromes"/>
    <property type="match status" value="1"/>
</dbReference>
<dbReference type="PROSITE" id="PS51003">
    <property type="entry name" value="CYTB_CTER"/>
    <property type="match status" value="1"/>
</dbReference>
<dbReference type="PROSITE" id="PS51002">
    <property type="entry name" value="CYTB_NTER"/>
    <property type="match status" value="1"/>
</dbReference>
<protein>
    <recommendedName>
        <fullName>Cytochrome b</fullName>
    </recommendedName>
    <alternativeName>
        <fullName>Complex III subunit 3</fullName>
    </alternativeName>
    <alternativeName>
        <fullName>Complex III subunit III</fullName>
    </alternativeName>
    <alternativeName>
        <fullName>Cytochrome b-c1 complex subunit 3</fullName>
    </alternativeName>
    <alternativeName>
        <fullName>Ubiquinol-cytochrome-c reductase complex cytochrome b subunit</fullName>
    </alternativeName>
</protein>
<comment type="function">
    <text evidence="2">Component of the ubiquinol-cytochrome c reductase complex (complex III or cytochrome b-c1 complex) that is part of the mitochondrial respiratory chain. The b-c1 complex mediates electron transfer from ubiquinol to cytochrome c. Contributes to the generation of a proton gradient across the mitochondrial membrane that is then used for ATP synthesis.</text>
</comment>
<comment type="cofactor">
    <cofactor evidence="2">
        <name>heme b</name>
        <dbReference type="ChEBI" id="CHEBI:60344"/>
    </cofactor>
    <text evidence="2">Binds 2 heme b groups non-covalently.</text>
</comment>
<comment type="subunit">
    <text evidence="2">The cytochrome bc1 complex contains 11 subunits: 3 respiratory subunits (MT-CYB, CYC1 and UQCRFS1), 2 core proteins (UQCRC1 and UQCRC2) and 6 low-molecular weight proteins (UQCRH/QCR6, UQCRB/QCR7, UQCRQ/QCR8, UQCR10/QCR9, UQCR11/QCR10 and a cleavage product of UQCRFS1). This cytochrome bc1 complex then forms a dimer.</text>
</comment>
<comment type="subcellular location">
    <subcellularLocation>
        <location evidence="2">Mitochondrion inner membrane</location>
        <topology evidence="2">Multi-pass membrane protein</topology>
    </subcellularLocation>
</comment>
<comment type="miscellaneous">
    <text evidence="1">Heme 1 (or BL or b562) is low-potential and absorbs at about 562 nm, and heme 2 (or BH or b566) is high-potential and absorbs at about 566 nm.</text>
</comment>
<comment type="similarity">
    <text evidence="3 4">Belongs to the cytochrome b family.</text>
</comment>
<comment type="caution">
    <text evidence="2">The full-length protein contains only eight transmembrane helices, not nine as predicted by bioinformatics tools.</text>
</comment>
<proteinExistence type="inferred from homology"/>
<gene>
    <name type="primary">MT-CYB</name>
    <name type="synonym">COB</name>
    <name type="synonym">CYTB</name>
    <name type="synonym">MTCYB</name>
</gene>
<geneLocation type="mitochondrion"/>
<sequence length="379" mass="42534">MKILRKNHPLLKIINHSFIDLPTPSNISSWWNFGSLLALCLAIQILTGLFLAMHYTSDTTTAFSSVAHICRDVNYGWLIRYLHANGASMFFICLFIHVGRGIYYGSYVLSETWNIGIILFLTTMATAFVGYVLPWGQMSFWGATVITNLLSAIPYIGNTLVEWIWGGFSVDKATLTRFFAFHFILPFIIAAFVLVHLLFLHETGSNNPSGLNSDSDKIPFHPYYTIKDLLGVFLLLLALMTLALFFPDVLGDPDNFTPANPLNTPAHXXPEWYFLFAYAILRSIPNKLGGVLALVLSILILAAFPLLNTSKQHGLIFRPITQIIFWIFIANLLLLTWIGGQPVEYPFTAIGQIASITYFIIIIILMPVSNTIENNIIKL</sequence>